<evidence type="ECO:0000250" key="1">
    <source>
        <dbReference type="UniProtKB" id="E9Q6W4"/>
    </source>
</evidence>
<evidence type="ECO:0000255" key="2">
    <source>
        <dbReference type="PROSITE-ProRule" id="PRU00042"/>
    </source>
</evidence>
<evidence type="ECO:0000256" key="3">
    <source>
        <dbReference type="SAM" id="MobiDB-lite"/>
    </source>
</evidence>
<evidence type="ECO:0000305" key="4"/>
<evidence type="ECO:0007744" key="5">
    <source>
    </source>
</evidence>
<feature type="chain" id="PRO_0000047542" description="Zinc finger protein 296">
    <location>
        <begin position="1"/>
        <end position="475"/>
    </location>
</feature>
<feature type="zinc finger region" description="C2H2-type 1" evidence="2">
    <location>
        <begin position="157"/>
        <end position="180"/>
    </location>
</feature>
<feature type="zinc finger region" description="C2H2-type 2" evidence="2">
    <location>
        <begin position="231"/>
        <end position="253"/>
    </location>
</feature>
<feature type="zinc finger region" description="C2H2-type 3" evidence="2">
    <location>
        <begin position="259"/>
        <end position="281"/>
    </location>
</feature>
<feature type="zinc finger region" description="C2H2-type 4" evidence="2">
    <location>
        <begin position="386"/>
        <end position="408"/>
    </location>
</feature>
<feature type="zinc finger region" description="C2H2-type 5" evidence="2">
    <location>
        <begin position="414"/>
        <end position="436"/>
    </location>
</feature>
<feature type="zinc finger region" description="C2H2-type 6" evidence="2">
    <location>
        <begin position="445"/>
        <end position="468"/>
    </location>
</feature>
<feature type="region of interest" description="Disordered" evidence="3">
    <location>
        <begin position="1"/>
        <end position="78"/>
    </location>
</feature>
<feature type="region of interest" description="Disordered" evidence="3">
    <location>
        <begin position="275"/>
        <end position="385"/>
    </location>
</feature>
<feature type="compositionally biased region" description="Low complexity" evidence="3">
    <location>
        <begin position="295"/>
        <end position="313"/>
    </location>
</feature>
<feature type="compositionally biased region" description="Low complexity" evidence="3">
    <location>
        <begin position="326"/>
        <end position="338"/>
    </location>
</feature>
<feature type="compositionally biased region" description="Gly residues" evidence="3">
    <location>
        <begin position="339"/>
        <end position="351"/>
    </location>
</feature>
<feature type="compositionally biased region" description="Polar residues" evidence="3">
    <location>
        <begin position="354"/>
        <end position="367"/>
    </location>
</feature>
<feature type="cross-link" description="Glycyl lysine isopeptide (Lys-Gly) (interchain with G-Cter in SUMO2)" evidence="5">
    <location>
        <position position="35"/>
    </location>
</feature>
<name>ZN296_HUMAN</name>
<comment type="function">
    <text evidence="1">May be a transcriptional corepressor with KLF4.</text>
</comment>
<comment type="subunit">
    <text evidence="1">Interacts with KLF4.</text>
</comment>
<comment type="interaction">
    <interactant intactId="EBI-8834821">
        <id>Q8WUU4</id>
    </interactant>
    <interactant intactId="EBI-6875961">
        <id>P02489</id>
        <label>CRYAA</label>
    </interactant>
    <organismsDiffer>false</organismsDiffer>
    <experiments>3</experiments>
</comment>
<comment type="interaction">
    <interactant intactId="EBI-8834821">
        <id>Q8WUU4</id>
    </interactant>
    <interactant intactId="EBI-348399">
        <id>P22607</id>
        <label>FGFR3</label>
    </interactant>
    <organismsDiffer>false</organismsDiffer>
    <experiments>3</experiments>
</comment>
<comment type="interaction">
    <interactant intactId="EBI-8834821">
        <id>Q8WUU4</id>
    </interactant>
    <interactant intactId="EBI-10226858">
        <id>Q0VDC6</id>
        <label>FKBP1A</label>
    </interactant>
    <organismsDiffer>false</organismsDiffer>
    <experiments>3</experiments>
</comment>
<comment type="interaction">
    <interactant intactId="EBI-8834821">
        <id>Q8WUU4</id>
    </interactant>
    <interactant intactId="EBI-25913156">
        <id>O14908-2</id>
        <label>GIPC1</label>
    </interactant>
    <organismsDiffer>false</organismsDiffer>
    <experiments>3</experiments>
</comment>
<comment type="interaction">
    <interactant intactId="EBI-8834821">
        <id>Q8WUU4</id>
    </interactant>
    <interactant intactId="EBI-747754">
        <id>P28799</id>
        <label>GRN</label>
    </interactant>
    <organismsDiffer>false</organismsDiffer>
    <experiments>3</experiments>
</comment>
<comment type="interaction">
    <interactant intactId="EBI-8834821">
        <id>Q8WUU4</id>
    </interactant>
    <interactant intactId="EBI-356991">
        <id>P54652</id>
        <label>HSPA2</label>
    </interactant>
    <organismsDiffer>false</organismsDiffer>
    <experiments>3</experiments>
</comment>
<comment type="interaction">
    <interactant intactId="EBI-8834821">
        <id>Q8WUU4</id>
    </interactant>
    <interactant intactId="EBI-749195">
        <id>P60891</id>
        <label>PRPS1</label>
    </interactant>
    <organismsDiffer>false</organismsDiffer>
    <experiments>3</experiments>
</comment>
<comment type="interaction">
    <interactant intactId="EBI-8834821">
        <id>Q8WUU4</id>
    </interactant>
    <interactant intactId="EBI-396669">
        <id>Q9Y3C5</id>
        <label>RNF11</label>
    </interactant>
    <organismsDiffer>false</organismsDiffer>
    <experiments>3</experiments>
</comment>
<comment type="interaction">
    <interactant intactId="EBI-8834821">
        <id>Q8WUU4</id>
    </interactant>
    <interactant intactId="EBI-985879">
        <id>P37840</id>
        <label>SNCA</label>
    </interactant>
    <organismsDiffer>false</organismsDiffer>
    <experiments>3</experiments>
</comment>
<comment type="interaction">
    <interactant intactId="EBI-8834821">
        <id>Q8WUU4</id>
    </interactant>
    <interactant intactId="EBI-2559665">
        <id>Q5JTV8</id>
        <label>TOR1AIP1</label>
    </interactant>
    <organismsDiffer>false</organismsDiffer>
    <experiments>3</experiments>
</comment>
<comment type="interaction">
    <interactant intactId="EBI-8834821">
        <id>Q8WUU4</id>
    </interactant>
    <interactant intactId="EBI-741480">
        <id>Q9UMX0</id>
        <label>UBQLN1</label>
    </interactant>
    <organismsDiffer>false</organismsDiffer>
    <experiments>3</experiments>
</comment>
<comment type="subcellular location">
    <subcellularLocation>
        <location evidence="1">Nucleus</location>
    </subcellularLocation>
</comment>
<comment type="similarity">
    <text evidence="4">Belongs to the krueppel C2H2-type zinc-finger protein family.</text>
</comment>
<sequence>MSRRKAGSAPRRVEPAPAANPDDEMEMQDLVIELKPEPDAQPQQAPRLGPFSPKEVSSAGRFGGEPHHSPGPMPAGAALLALGPRNPWTLWTPLTPNYPDRQPWTDKHPDLLTCGRCLQTFPLEAITAFMDHKKLGCQLFRGPSRGQGSEREELKALSCLRCGKQFTVAWKLLRHAQWDHGLSIYQTESEAPEAPLLGLAEVAAAVSAVVGPAAEAKSPRASGSGLTRRSPTCPVCKKTLSSFSNLKVHMRSHTGERPYACDQCPYACAQSSKLNRHKKTHRQVPPQSPLMADTSQEQASAAPPEPAVHAAAPTSTLPCSGGEGAGAAATAGVQEPGAPGSGAQAGPGGDTWGAITTEQRTDPANSQKASPKKMPKSGGKSRGPGGSCEFCGKHFTNSSNLTVHRRSHTGERPYTCEFCNYACAQSSKLNRHRRMHGMTPGSTRFECPHCHVPFGLRATLDKHLRQKHPEAAGEA</sequence>
<reference key="1">
    <citation type="journal article" date="2004" name="Genome Res.">
        <title>The status, quality, and expansion of the NIH full-length cDNA project: the Mammalian Gene Collection (MGC).</title>
        <authorList>
            <consortium name="The MGC Project Team"/>
        </authorList>
    </citation>
    <scope>NUCLEOTIDE SEQUENCE [LARGE SCALE MRNA]</scope>
    <source>
        <tissue>Lung</tissue>
    </source>
</reference>
<reference key="2">
    <citation type="journal article" date="2017" name="Nat. Struct. Mol. Biol.">
        <title>Site-specific mapping of the human SUMO proteome reveals co-modification with phosphorylation.</title>
        <authorList>
            <person name="Hendriks I.A."/>
            <person name="Lyon D."/>
            <person name="Young C."/>
            <person name="Jensen L.J."/>
            <person name="Vertegaal A.C."/>
            <person name="Nielsen M.L."/>
        </authorList>
    </citation>
    <scope>SUMOYLATION [LARGE SCALE ANALYSIS] AT LYS-35</scope>
    <scope>IDENTIFICATION BY MASS SPECTROMETRY [LARGE SCALE ANALYSIS]</scope>
</reference>
<protein>
    <recommendedName>
        <fullName>Zinc finger protein 296</fullName>
        <shortName>ZFP296</shortName>
    </recommendedName>
    <alternativeName>
        <fullName>Zinc finger protein 342</fullName>
    </alternativeName>
</protein>
<keyword id="KW-1017">Isopeptide bond</keyword>
<keyword id="KW-0479">Metal-binding</keyword>
<keyword id="KW-0539">Nucleus</keyword>
<keyword id="KW-1267">Proteomics identification</keyword>
<keyword id="KW-1185">Reference proteome</keyword>
<keyword id="KW-0677">Repeat</keyword>
<keyword id="KW-0804">Transcription</keyword>
<keyword id="KW-0805">Transcription regulation</keyword>
<keyword id="KW-0832">Ubl conjugation</keyword>
<keyword id="KW-0862">Zinc</keyword>
<keyword id="KW-0863">Zinc-finger</keyword>
<dbReference type="EMBL" id="BC019352">
    <property type="protein sequence ID" value="AAH19352.1"/>
    <property type="molecule type" value="mRNA"/>
</dbReference>
<dbReference type="CCDS" id="CCDS12653.1"/>
<dbReference type="RefSeq" id="NP_660331.1">
    <property type="nucleotide sequence ID" value="NM_145288.3"/>
</dbReference>
<dbReference type="SMR" id="Q8WUU4"/>
<dbReference type="BioGRID" id="127837">
    <property type="interactions" value="30"/>
</dbReference>
<dbReference type="FunCoup" id="Q8WUU4">
    <property type="interactions" value="86"/>
</dbReference>
<dbReference type="IntAct" id="Q8WUU4">
    <property type="interactions" value="19"/>
</dbReference>
<dbReference type="STRING" id="9606.ENSP00000302770"/>
<dbReference type="iPTMnet" id="Q8WUU4"/>
<dbReference type="PhosphoSitePlus" id="Q8WUU4"/>
<dbReference type="BioMuta" id="ZNF296"/>
<dbReference type="DMDM" id="23396987"/>
<dbReference type="jPOST" id="Q8WUU4"/>
<dbReference type="MassIVE" id="Q8WUU4"/>
<dbReference type="PaxDb" id="9606-ENSP00000302770"/>
<dbReference type="PeptideAtlas" id="Q8WUU4"/>
<dbReference type="ProteomicsDB" id="74710"/>
<dbReference type="Antibodypedia" id="17828">
    <property type="antibodies" value="120 antibodies from 19 providers"/>
</dbReference>
<dbReference type="DNASU" id="162979"/>
<dbReference type="Ensembl" id="ENST00000303809.7">
    <property type="protein sequence ID" value="ENSP00000302770.1"/>
    <property type="gene ID" value="ENSG00000170684.10"/>
</dbReference>
<dbReference type="GeneID" id="162979"/>
<dbReference type="KEGG" id="hsa:162979"/>
<dbReference type="MANE-Select" id="ENST00000303809.7">
    <property type="protein sequence ID" value="ENSP00000302770.1"/>
    <property type="RefSeq nucleotide sequence ID" value="NM_145288.3"/>
    <property type="RefSeq protein sequence ID" value="NP_660331.1"/>
</dbReference>
<dbReference type="UCSC" id="uc002pao.4">
    <property type="organism name" value="human"/>
</dbReference>
<dbReference type="AGR" id="HGNC:15981"/>
<dbReference type="CTD" id="162979"/>
<dbReference type="DisGeNET" id="162979"/>
<dbReference type="GeneCards" id="ZNF296"/>
<dbReference type="HGNC" id="HGNC:15981">
    <property type="gene designation" value="ZNF296"/>
</dbReference>
<dbReference type="HPA" id="ENSG00000170684">
    <property type="expression patterns" value="Tissue enhanced (esophagus)"/>
</dbReference>
<dbReference type="MIM" id="613226">
    <property type="type" value="gene"/>
</dbReference>
<dbReference type="neXtProt" id="NX_Q8WUU4"/>
<dbReference type="OpenTargets" id="ENSG00000170684"/>
<dbReference type="PharmGKB" id="PA37660"/>
<dbReference type="VEuPathDB" id="HostDB:ENSG00000170684"/>
<dbReference type="eggNOG" id="KOG1721">
    <property type="taxonomic scope" value="Eukaryota"/>
</dbReference>
<dbReference type="GeneTree" id="ENSGT00940000160667"/>
<dbReference type="InParanoid" id="Q8WUU4"/>
<dbReference type="OMA" id="RNQWALW"/>
<dbReference type="OrthoDB" id="10046198at2759"/>
<dbReference type="PAN-GO" id="Q8WUU4">
    <property type="GO annotations" value="4 GO annotations based on evolutionary models"/>
</dbReference>
<dbReference type="PhylomeDB" id="Q8WUU4"/>
<dbReference type="TreeFam" id="TF318131"/>
<dbReference type="PathwayCommons" id="Q8WUU4"/>
<dbReference type="SignaLink" id="Q8WUU4"/>
<dbReference type="BioGRID-ORCS" id="162979">
    <property type="hits" value="21 hits in 1183 CRISPR screens"/>
</dbReference>
<dbReference type="GenomeRNAi" id="162979"/>
<dbReference type="Pharos" id="Q8WUU4">
    <property type="development level" value="Tbio"/>
</dbReference>
<dbReference type="PRO" id="PR:Q8WUU4"/>
<dbReference type="Proteomes" id="UP000005640">
    <property type="component" value="Chromosome 19"/>
</dbReference>
<dbReference type="RNAct" id="Q8WUU4">
    <property type="molecule type" value="protein"/>
</dbReference>
<dbReference type="Bgee" id="ENSG00000170684">
    <property type="expression patterns" value="Expressed in primordial germ cell in gonad and 119 other cell types or tissues"/>
</dbReference>
<dbReference type="ExpressionAtlas" id="Q8WUU4">
    <property type="expression patterns" value="baseline and differential"/>
</dbReference>
<dbReference type="GO" id="GO:0005634">
    <property type="term" value="C:nucleus"/>
    <property type="evidence" value="ECO:0000318"/>
    <property type="project" value="GO_Central"/>
</dbReference>
<dbReference type="GO" id="GO:0003700">
    <property type="term" value="F:DNA-binding transcription factor activity"/>
    <property type="evidence" value="ECO:0000318"/>
    <property type="project" value="GO_Central"/>
</dbReference>
<dbReference type="GO" id="GO:0000978">
    <property type="term" value="F:RNA polymerase II cis-regulatory region sequence-specific DNA binding"/>
    <property type="evidence" value="ECO:0000318"/>
    <property type="project" value="GO_Central"/>
</dbReference>
<dbReference type="GO" id="GO:1990837">
    <property type="term" value="F:sequence-specific double-stranded DNA binding"/>
    <property type="evidence" value="ECO:0000314"/>
    <property type="project" value="ARUK-UCL"/>
</dbReference>
<dbReference type="GO" id="GO:0008270">
    <property type="term" value="F:zinc ion binding"/>
    <property type="evidence" value="ECO:0007669"/>
    <property type="project" value="UniProtKB-KW"/>
</dbReference>
<dbReference type="GO" id="GO:2000171">
    <property type="term" value="P:negative regulation of dendrite development"/>
    <property type="evidence" value="ECO:0000318"/>
    <property type="project" value="GO_Central"/>
</dbReference>
<dbReference type="GO" id="GO:0000122">
    <property type="term" value="P:negative regulation of transcription by RNA polymerase II"/>
    <property type="evidence" value="ECO:0007669"/>
    <property type="project" value="Ensembl"/>
</dbReference>
<dbReference type="GO" id="GO:0006357">
    <property type="term" value="P:regulation of transcription by RNA polymerase II"/>
    <property type="evidence" value="ECO:0000318"/>
    <property type="project" value="GO_Central"/>
</dbReference>
<dbReference type="GO" id="GO:0007283">
    <property type="term" value="P:spermatogenesis"/>
    <property type="evidence" value="ECO:0000250"/>
    <property type="project" value="UniProtKB"/>
</dbReference>
<dbReference type="FunFam" id="3.30.160.60:FF:000055">
    <property type="entry name" value="B-cell lymphoma/leukemia 11A isoform X1"/>
    <property type="match status" value="1"/>
</dbReference>
<dbReference type="FunFam" id="3.30.160.60:FF:000046">
    <property type="entry name" value="Putative B-cell lymphoma/leukemia 11A"/>
    <property type="match status" value="1"/>
</dbReference>
<dbReference type="FunFam" id="3.30.160.60:FF:001546">
    <property type="entry name" value="Zinc finger protein 296"/>
    <property type="match status" value="1"/>
</dbReference>
<dbReference type="FunFam" id="3.30.160.60:FF:001829">
    <property type="entry name" value="Zinc finger protein 296"/>
    <property type="match status" value="1"/>
</dbReference>
<dbReference type="Gene3D" id="3.30.160.60">
    <property type="entry name" value="Classic Zinc Finger"/>
    <property type="match status" value="4"/>
</dbReference>
<dbReference type="InterPro" id="IPR051497">
    <property type="entry name" value="Dev/Hematopoietic_TF"/>
</dbReference>
<dbReference type="InterPro" id="IPR036236">
    <property type="entry name" value="Znf_C2H2_sf"/>
</dbReference>
<dbReference type="InterPro" id="IPR013087">
    <property type="entry name" value="Znf_C2H2_type"/>
</dbReference>
<dbReference type="PANTHER" id="PTHR45993">
    <property type="entry name" value="B-CELL LYMPHOMA/LEUKEMIA 11"/>
    <property type="match status" value="1"/>
</dbReference>
<dbReference type="PANTHER" id="PTHR45993:SF2">
    <property type="entry name" value="ZINC FINGER PROTEIN 296"/>
    <property type="match status" value="1"/>
</dbReference>
<dbReference type="Pfam" id="PF25491">
    <property type="entry name" value="CCHC_BCL-11A"/>
    <property type="match status" value="1"/>
</dbReference>
<dbReference type="Pfam" id="PF00096">
    <property type="entry name" value="zf-C2H2"/>
    <property type="match status" value="4"/>
</dbReference>
<dbReference type="SMART" id="SM00355">
    <property type="entry name" value="ZnF_C2H2"/>
    <property type="match status" value="6"/>
</dbReference>
<dbReference type="SUPFAM" id="SSF57667">
    <property type="entry name" value="beta-beta-alpha zinc fingers"/>
    <property type="match status" value="2"/>
</dbReference>
<dbReference type="PROSITE" id="PS00028">
    <property type="entry name" value="ZINC_FINGER_C2H2_1"/>
    <property type="match status" value="6"/>
</dbReference>
<dbReference type="PROSITE" id="PS50157">
    <property type="entry name" value="ZINC_FINGER_C2H2_2"/>
    <property type="match status" value="6"/>
</dbReference>
<accession>Q8WUU4</accession>
<proteinExistence type="evidence at protein level"/>
<gene>
    <name type="primary">ZNF296</name>
    <name type="synonym">ZNF342</name>
</gene>
<organism>
    <name type="scientific">Homo sapiens</name>
    <name type="common">Human</name>
    <dbReference type="NCBI Taxonomy" id="9606"/>
    <lineage>
        <taxon>Eukaryota</taxon>
        <taxon>Metazoa</taxon>
        <taxon>Chordata</taxon>
        <taxon>Craniata</taxon>
        <taxon>Vertebrata</taxon>
        <taxon>Euteleostomi</taxon>
        <taxon>Mammalia</taxon>
        <taxon>Eutheria</taxon>
        <taxon>Euarchontoglires</taxon>
        <taxon>Primates</taxon>
        <taxon>Haplorrhini</taxon>
        <taxon>Catarrhini</taxon>
        <taxon>Hominidae</taxon>
        <taxon>Homo</taxon>
    </lineage>
</organism>